<feature type="chain" id="PRO_1000199488" description="Serine--tRNA ligase">
    <location>
        <begin position="1"/>
        <end position="426"/>
    </location>
</feature>
<feature type="binding site" evidence="1">
    <location>
        <begin position="231"/>
        <end position="233"/>
    </location>
    <ligand>
        <name>L-serine</name>
        <dbReference type="ChEBI" id="CHEBI:33384"/>
    </ligand>
</feature>
<feature type="binding site" evidence="1">
    <location>
        <begin position="262"/>
        <end position="264"/>
    </location>
    <ligand>
        <name>ATP</name>
        <dbReference type="ChEBI" id="CHEBI:30616"/>
    </ligand>
</feature>
<feature type="binding site" evidence="1">
    <location>
        <position position="285"/>
    </location>
    <ligand>
        <name>L-serine</name>
        <dbReference type="ChEBI" id="CHEBI:33384"/>
    </ligand>
</feature>
<feature type="binding site" evidence="1">
    <location>
        <begin position="349"/>
        <end position="352"/>
    </location>
    <ligand>
        <name>ATP</name>
        <dbReference type="ChEBI" id="CHEBI:30616"/>
    </ligand>
</feature>
<feature type="binding site" evidence="1">
    <location>
        <position position="384"/>
    </location>
    <ligand>
        <name>L-serine</name>
        <dbReference type="ChEBI" id="CHEBI:33384"/>
    </ligand>
</feature>
<keyword id="KW-0030">Aminoacyl-tRNA synthetase</keyword>
<keyword id="KW-0067">ATP-binding</keyword>
<keyword id="KW-0963">Cytoplasm</keyword>
<keyword id="KW-0436">Ligase</keyword>
<keyword id="KW-0547">Nucleotide-binding</keyword>
<keyword id="KW-0648">Protein biosynthesis</keyword>
<keyword id="KW-1185">Reference proteome</keyword>
<organism>
    <name type="scientific">Laribacter hongkongensis (strain HLHK9)</name>
    <dbReference type="NCBI Taxonomy" id="557598"/>
    <lineage>
        <taxon>Bacteria</taxon>
        <taxon>Pseudomonadati</taxon>
        <taxon>Pseudomonadota</taxon>
        <taxon>Betaproteobacteria</taxon>
        <taxon>Neisseriales</taxon>
        <taxon>Aquaspirillaceae</taxon>
        <taxon>Laribacter</taxon>
    </lineage>
</organism>
<dbReference type="EC" id="6.1.1.11" evidence="1"/>
<dbReference type="EMBL" id="CP001154">
    <property type="protein sequence ID" value="ACO75540.1"/>
    <property type="molecule type" value="Genomic_DNA"/>
</dbReference>
<dbReference type="RefSeq" id="WP_012698026.1">
    <property type="nucleotide sequence ID" value="NC_012559.1"/>
</dbReference>
<dbReference type="SMR" id="C1DBY7"/>
<dbReference type="STRING" id="557598.LHK_02559"/>
<dbReference type="KEGG" id="lhk:LHK_02559"/>
<dbReference type="eggNOG" id="COG0172">
    <property type="taxonomic scope" value="Bacteria"/>
</dbReference>
<dbReference type="HOGENOM" id="CLU_023797_1_1_4"/>
<dbReference type="UniPathway" id="UPA00906">
    <property type="reaction ID" value="UER00895"/>
</dbReference>
<dbReference type="Proteomes" id="UP000002010">
    <property type="component" value="Chromosome"/>
</dbReference>
<dbReference type="GO" id="GO:0005737">
    <property type="term" value="C:cytoplasm"/>
    <property type="evidence" value="ECO:0007669"/>
    <property type="project" value="UniProtKB-SubCell"/>
</dbReference>
<dbReference type="GO" id="GO:0005524">
    <property type="term" value="F:ATP binding"/>
    <property type="evidence" value="ECO:0007669"/>
    <property type="project" value="UniProtKB-UniRule"/>
</dbReference>
<dbReference type="GO" id="GO:0004828">
    <property type="term" value="F:serine-tRNA ligase activity"/>
    <property type="evidence" value="ECO:0007669"/>
    <property type="project" value="UniProtKB-UniRule"/>
</dbReference>
<dbReference type="GO" id="GO:0016260">
    <property type="term" value="P:selenocysteine biosynthetic process"/>
    <property type="evidence" value="ECO:0007669"/>
    <property type="project" value="UniProtKB-UniRule"/>
</dbReference>
<dbReference type="GO" id="GO:0006434">
    <property type="term" value="P:seryl-tRNA aminoacylation"/>
    <property type="evidence" value="ECO:0007669"/>
    <property type="project" value="UniProtKB-UniRule"/>
</dbReference>
<dbReference type="CDD" id="cd00770">
    <property type="entry name" value="SerRS_core"/>
    <property type="match status" value="1"/>
</dbReference>
<dbReference type="Gene3D" id="3.30.930.10">
    <property type="entry name" value="Bira Bifunctional Protein, Domain 2"/>
    <property type="match status" value="1"/>
</dbReference>
<dbReference type="Gene3D" id="1.10.287.40">
    <property type="entry name" value="Serine-tRNA synthetase, tRNA binding domain"/>
    <property type="match status" value="1"/>
</dbReference>
<dbReference type="HAMAP" id="MF_00176">
    <property type="entry name" value="Ser_tRNA_synth_type1"/>
    <property type="match status" value="1"/>
</dbReference>
<dbReference type="InterPro" id="IPR002314">
    <property type="entry name" value="aa-tRNA-synt_IIb"/>
</dbReference>
<dbReference type="InterPro" id="IPR006195">
    <property type="entry name" value="aa-tRNA-synth_II"/>
</dbReference>
<dbReference type="InterPro" id="IPR045864">
    <property type="entry name" value="aa-tRNA-synth_II/BPL/LPL"/>
</dbReference>
<dbReference type="InterPro" id="IPR002317">
    <property type="entry name" value="Ser-tRNA-ligase_type_1"/>
</dbReference>
<dbReference type="InterPro" id="IPR015866">
    <property type="entry name" value="Ser-tRNA-synth_1_N"/>
</dbReference>
<dbReference type="InterPro" id="IPR042103">
    <property type="entry name" value="SerRS_1_N_sf"/>
</dbReference>
<dbReference type="InterPro" id="IPR033729">
    <property type="entry name" value="SerRS_core"/>
</dbReference>
<dbReference type="InterPro" id="IPR010978">
    <property type="entry name" value="tRNA-bd_arm"/>
</dbReference>
<dbReference type="NCBIfam" id="TIGR00414">
    <property type="entry name" value="serS"/>
    <property type="match status" value="1"/>
</dbReference>
<dbReference type="PANTHER" id="PTHR43697:SF1">
    <property type="entry name" value="SERINE--TRNA LIGASE"/>
    <property type="match status" value="1"/>
</dbReference>
<dbReference type="PANTHER" id="PTHR43697">
    <property type="entry name" value="SERYL-TRNA SYNTHETASE"/>
    <property type="match status" value="1"/>
</dbReference>
<dbReference type="Pfam" id="PF02403">
    <property type="entry name" value="Seryl_tRNA_N"/>
    <property type="match status" value="1"/>
</dbReference>
<dbReference type="Pfam" id="PF00587">
    <property type="entry name" value="tRNA-synt_2b"/>
    <property type="match status" value="1"/>
</dbReference>
<dbReference type="PIRSF" id="PIRSF001529">
    <property type="entry name" value="Ser-tRNA-synth_IIa"/>
    <property type="match status" value="1"/>
</dbReference>
<dbReference type="PRINTS" id="PR00981">
    <property type="entry name" value="TRNASYNTHSER"/>
</dbReference>
<dbReference type="SUPFAM" id="SSF55681">
    <property type="entry name" value="Class II aaRS and biotin synthetases"/>
    <property type="match status" value="1"/>
</dbReference>
<dbReference type="SUPFAM" id="SSF46589">
    <property type="entry name" value="tRNA-binding arm"/>
    <property type="match status" value="1"/>
</dbReference>
<dbReference type="PROSITE" id="PS50862">
    <property type="entry name" value="AA_TRNA_LIGASE_II"/>
    <property type="match status" value="1"/>
</dbReference>
<reference key="1">
    <citation type="journal article" date="2009" name="PLoS Genet.">
        <title>The complete genome and proteome of Laribacter hongkongensis reveal potential mechanisms for adaptations to different temperatures and habitats.</title>
        <authorList>
            <person name="Woo P.C.Y."/>
            <person name="Lau S.K.P."/>
            <person name="Tse H."/>
            <person name="Teng J.L.L."/>
            <person name="Curreem S.O."/>
            <person name="Tsang A.K.L."/>
            <person name="Fan R.Y.Y."/>
            <person name="Wong G.K.M."/>
            <person name="Huang Y."/>
            <person name="Loman N.J."/>
            <person name="Snyder L.A.S."/>
            <person name="Cai J.J."/>
            <person name="Huang J.-D."/>
            <person name="Mak W."/>
            <person name="Pallen M.J."/>
            <person name="Lok S."/>
            <person name="Yuen K.-Y."/>
        </authorList>
    </citation>
    <scope>NUCLEOTIDE SEQUENCE [LARGE SCALE GENOMIC DNA]</scope>
    <source>
        <strain>HLHK9</strain>
    </source>
</reference>
<evidence type="ECO:0000255" key="1">
    <source>
        <dbReference type="HAMAP-Rule" id="MF_00176"/>
    </source>
</evidence>
<sequence>MLDIQLLRTQLDTVAARLAARGYTLDTEAFTALENERKALQTRTQDLQARRNSLSKQVGEAKRRGEDASAVLAEVSGLGDELKANEAALEGLQGRLAELLQAIPNLPHESVPVGRDETGNVEIRRVGVPRSFDFQVKDHVDIGTPLGLDAETGAKLSGARFTVLRGQMARLHRALAQFMLNTHADEHGYTEVYTPYMVNATSMYGTGQLPKFEEDLFRVPRGDENFYLVPTAEVPVTNFVRDEIVKAADLPLRYVAHTPCFRSEAGAYGRDTRGMIRQHQFDKVELVQVVRPEESLNALETLTGHAETILKKLGLPYRVIVLCTGDMGFGSQKTYDIEVWLPAQDTYREISSCSSMGDFQARRMQARFKDEAGKNQLVHTLNGSGLAVGRTLVAVLENYQNADGSVTVPEVLRPYMGGLEKLLPQG</sequence>
<accession>C1DBY7</accession>
<proteinExistence type="inferred from homology"/>
<name>SYS_LARHH</name>
<gene>
    <name evidence="1" type="primary">serS</name>
    <name type="ordered locus">LHK_02559</name>
</gene>
<comment type="function">
    <text evidence="1">Catalyzes the attachment of serine to tRNA(Ser). Is also able to aminoacylate tRNA(Sec) with serine, to form the misacylated tRNA L-seryl-tRNA(Sec), which will be further converted into selenocysteinyl-tRNA(Sec).</text>
</comment>
<comment type="catalytic activity">
    <reaction evidence="1">
        <text>tRNA(Ser) + L-serine + ATP = L-seryl-tRNA(Ser) + AMP + diphosphate + H(+)</text>
        <dbReference type="Rhea" id="RHEA:12292"/>
        <dbReference type="Rhea" id="RHEA-COMP:9669"/>
        <dbReference type="Rhea" id="RHEA-COMP:9703"/>
        <dbReference type="ChEBI" id="CHEBI:15378"/>
        <dbReference type="ChEBI" id="CHEBI:30616"/>
        <dbReference type="ChEBI" id="CHEBI:33019"/>
        <dbReference type="ChEBI" id="CHEBI:33384"/>
        <dbReference type="ChEBI" id="CHEBI:78442"/>
        <dbReference type="ChEBI" id="CHEBI:78533"/>
        <dbReference type="ChEBI" id="CHEBI:456215"/>
        <dbReference type="EC" id="6.1.1.11"/>
    </reaction>
</comment>
<comment type="catalytic activity">
    <reaction evidence="1">
        <text>tRNA(Sec) + L-serine + ATP = L-seryl-tRNA(Sec) + AMP + diphosphate + H(+)</text>
        <dbReference type="Rhea" id="RHEA:42580"/>
        <dbReference type="Rhea" id="RHEA-COMP:9742"/>
        <dbReference type="Rhea" id="RHEA-COMP:10128"/>
        <dbReference type="ChEBI" id="CHEBI:15378"/>
        <dbReference type="ChEBI" id="CHEBI:30616"/>
        <dbReference type="ChEBI" id="CHEBI:33019"/>
        <dbReference type="ChEBI" id="CHEBI:33384"/>
        <dbReference type="ChEBI" id="CHEBI:78442"/>
        <dbReference type="ChEBI" id="CHEBI:78533"/>
        <dbReference type="ChEBI" id="CHEBI:456215"/>
        <dbReference type="EC" id="6.1.1.11"/>
    </reaction>
</comment>
<comment type="pathway">
    <text evidence="1">Aminoacyl-tRNA biosynthesis; selenocysteinyl-tRNA(Sec) biosynthesis; L-seryl-tRNA(Sec) from L-serine and tRNA(Sec): step 1/1.</text>
</comment>
<comment type="subunit">
    <text evidence="1">Homodimer. The tRNA molecule binds across the dimer.</text>
</comment>
<comment type="subcellular location">
    <subcellularLocation>
        <location evidence="1">Cytoplasm</location>
    </subcellularLocation>
</comment>
<comment type="domain">
    <text evidence="1">Consists of two distinct domains, a catalytic core and a N-terminal extension that is involved in tRNA binding.</text>
</comment>
<comment type="similarity">
    <text evidence="1">Belongs to the class-II aminoacyl-tRNA synthetase family. Type-1 seryl-tRNA synthetase subfamily.</text>
</comment>
<protein>
    <recommendedName>
        <fullName evidence="1">Serine--tRNA ligase</fullName>
        <ecNumber evidence="1">6.1.1.11</ecNumber>
    </recommendedName>
    <alternativeName>
        <fullName evidence="1">Seryl-tRNA synthetase</fullName>
        <shortName evidence="1">SerRS</shortName>
    </alternativeName>
    <alternativeName>
        <fullName evidence="1">Seryl-tRNA(Ser/Sec) synthetase</fullName>
    </alternativeName>
</protein>